<reference key="1">
    <citation type="journal article" date="2006" name="Genome Biol.">
        <title>Genomic analysis reveals that Pseudomonas aeruginosa virulence is combinatorial.</title>
        <authorList>
            <person name="Lee D.G."/>
            <person name="Urbach J.M."/>
            <person name="Wu G."/>
            <person name="Liberati N.T."/>
            <person name="Feinbaum R.L."/>
            <person name="Miyata S."/>
            <person name="Diggins L.T."/>
            <person name="He J."/>
            <person name="Saucier M."/>
            <person name="Deziel E."/>
            <person name="Friedman L."/>
            <person name="Li L."/>
            <person name="Grills G."/>
            <person name="Montgomery K."/>
            <person name="Kucherlapati R."/>
            <person name="Rahme L.G."/>
            <person name="Ausubel F.M."/>
        </authorList>
    </citation>
    <scope>NUCLEOTIDE SEQUENCE [LARGE SCALE GENOMIC DNA]</scope>
    <source>
        <strain>UCBPP-PA14</strain>
    </source>
</reference>
<reference key="2">
    <citation type="journal article" date="2014" name="PLoS ONE">
        <title>High-throughput screening of dipeptide utilization mediated by the ABC transporter DppBCDF and its substrate-binding proteins DppA1-A5 in Pseudomonas aeruginosa.</title>
        <authorList>
            <person name="Pletzer D."/>
            <person name="Lafon C."/>
            <person name="Braun Y."/>
            <person name="Koehler T."/>
            <person name="Page M.G."/>
            <person name="Mourez M."/>
            <person name="Weingart H."/>
        </authorList>
    </citation>
    <scope>FUNCTION</scope>
    <scope>SUBUNIT</scope>
    <scope>DISRUPTION PHENOTYPE</scope>
    <source>
        <strain>UCBPP-PA14</strain>
    </source>
</reference>
<proteinExistence type="evidence at protein level"/>
<accession>A0A0H2ZGW7</accession>
<evidence type="ECO:0000250" key="1">
    <source>
        <dbReference type="UniProtKB" id="P0AEF8"/>
    </source>
</evidence>
<evidence type="ECO:0000255" key="2"/>
<evidence type="ECO:0000255" key="3">
    <source>
        <dbReference type="PROSITE-ProRule" id="PRU00441"/>
    </source>
</evidence>
<evidence type="ECO:0000269" key="4">
    <source>
    </source>
</evidence>
<evidence type="ECO:0000303" key="5">
    <source>
    </source>
</evidence>
<evidence type="ECO:0000305" key="6"/>
<evidence type="ECO:0000312" key="7">
    <source>
        <dbReference type="EMBL" id="ABJ13770.1"/>
    </source>
</evidence>
<feature type="chain" id="PRO_0000452194" description="Di/tripeptide transport system permease protein DppB">
    <location>
        <begin position="1"/>
        <end position="336"/>
    </location>
</feature>
<feature type="transmembrane region" description="Helical" evidence="2">
    <location>
        <begin position="10"/>
        <end position="30"/>
    </location>
</feature>
<feature type="transmembrane region" description="Helical" evidence="2">
    <location>
        <begin position="102"/>
        <end position="122"/>
    </location>
</feature>
<feature type="transmembrane region" description="Helical" evidence="2">
    <location>
        <begin position="145"/>
        <end position="165"/>
    </location>
</feature>
<feature type="transmembrane region" description="Helical" evidence="2">
    <location>
        <begin position="198"/>
        <end position="218"/>
    </location>
</feature>
<feature type="transmembrane region" description="Helical" evidence="2">
    <location>
        <begin position="257"/>
        <end position="277"/>
    </location>
</feature>
<feature type="transmembrane region" description="Helical" evidence="2">
    <location>
        <begin position="307"/>
        <end position="327"/>
    </location>
</feature>
<feature type="domain" description="ABC transmembrane type-1" evidence="3">
    <location>
        <begin position="96"/>
        <end position="325"/>
    </location>
</feature>
<dbReference type="EMBL" id="CP000438">
    <property type="protein sequence ID" value="ABJ13770.1"/>
    <property type="molecule type" value="Genomic_DNA"/>
</dbReference>
<dbReference type="RefSeq" id="WP_003105448.1">
    <property type="nucleotide sequence ID" value="NZ_CP034244.1"/>
</dbReference>
<dbReference type="SMR" id="A0A0H2ZGW7"/>
<dbReference type="KEGG" id="pau:PA14_58440"/>
<dbReference type="HOGENOM" id="CLU_036879_0_0_6"/>
<dbReference type="BioCyc" id="PAER208963:G1G74-4922-MONOMER"/>
<dbReference type="Proteomes" id="UP000000653">
    <property type="component" value="Chromosome"/>
</dbReference>
<dbReference type="GO" id="GO:0005886">
    <property type="term" value="C:plasma membrane"/>
    <property type="evidence" value="ECO:0007669"/>
    <property type="project" value="UniProtKB-SubCell"/>
</dbReference>
<dbReference type="GO" id="GO:0071916">
    <property type="term" value="F:dipeptide transmembrane transporter activity"/>
    <property type="evidence" value="ECO:0007669"/>
    <property type="project" value="TreeGrafter"/>
</dbReference>
<dbReference type="GO" id="GO:0015031">
    <property type="term" value="P:protein transport"/>
    <property type="evidence" value="ECO:0007669"/>
    <property type="project" value="UniProtKB-KW"/>
</dbReference>
<dbReference type="CDD" id="cd06261">
    <property type="entry name" value="TM_PBP2"/>
    <property type="match status" value="1"/>
</dbReference>
<dbReference type="Gene3D" id="1.10.3720.10">
    <property type="entry name" value="MetI-like"/>
    <property type="match status" value="1"/>
</dbReference>
<dbReference type="InterPro" id="IPR045621">
    <property type="entry name" value="BPD_transp_1_N"/>
</dbReference>
<dbReference type="InterPro" id="IPR000515">
    <property type="entry name" value="MetI-like"/>
</dbReference>
<dbReference type="InterPro" id="IPR035906">
    <property type="entry name" value="MetI-like_sf"/>
</dbReference>
<dbReference type="PANTHER" id="PTHR43163">
    <property type="entry name" value="DIPEPTIDE TRANSPORT SYSTEM PERMEASE PROTEIN DPPB-RELATED"/>
    <property type="match status" value="1"/>
</dbReference>
<dbReference type="PANTHER" id="PTHR43163:SF6">
    <property type="entry name" value="DIPEPTIDE TRANSPORT SYSTEM PERMEASE PROTEIN DPPB-RELATED"/>
    <property type="match status" value="1"/>
</dbReference>
<dbReference type="Pfam" id="PF00528">
    <property type="entry name" value="BPD_transp_1"/>
    <property type="match status" value="1"/>
</dbReference>
<dbReference type="Pfam" id="PF19300">
    <property type="entry name" value="BPD_transp_1_N"/>
    <property type="match status" value="1"/>
</dbReference>
<dbReference type="SUPFAM" id="SSF161098">
    <property type="entry name" value="MetI-like"/>
    <property type="match status" value="1"/>
</dbReference>
<dbReference type="PROSITE" id="PS50928">
    <property type="entry name" value="ABC_TM1"/>
    <property type="match status" value="1"/>
</dbReference>
<keyword id="KW-0997">Cell inner membrane</keyword>
<keyword id="KW-1003">Cell membrane</keyword>
<keyword id="KW-0472">Membrane</keyword>
<keyword id="KW-0571">Peptide transport</keyword>
<keyword id="KW-0653">Protein transport</keyword>
<keyword id="KW-0812">Transmembrane</keyword>
<keyword id="KW-1133">Transmembrane helix</keyword>
<keyword id="KW-0813">Transport</keyword>
<comment type="function">
    <text evidence="4 6">Part of the ABC transporter DppABCDF involved in the uptake of various di/tripeptides (PubMed:25338022). Is also involved in the uptake of phaseolotoxin, a toxic tripeptide inhibiting the enzyme ornithine carbamoyltransferase (PubMed:25338022). Responsible for the translocation of the substrate across the membrane (Probable).</text>
</comment>
<comment type="subunit">
    <text evidence="4">The complex is composed of two ATP-binding proteins (DppD and DppF), two transmembrane proteins (DppB and DppC) and a solute-binding protein (DppA1-A5) (PubMed:25338022). Five orthologous SBPs (DppA1-A5) are present in P.aeruginosa, which increases the substrate specificity of the DppBCDF transporter (PubMed:25338022).</text>
</comment>
<comment type="subcellular location">
    <subcellularLocation>
        <location evidence="1">Cell inner membrane</location>
        <topology evidence="2">Multi-pass membrane protein</topology>
    </subcellularLocation>
</comment>
<comment type="disruption phenotype">
    <text evidence="4">Deletion of the dppBCDF operon leads to reduced ability to utilize di/tripeptides as nitrogen source.</text>
</comment>
<comment type="similarity">
    <text evidence="6">Belongs to the binding-protein-dependent transport system permease family. OppBC subfamily.</text>
</comment>
<organism>
    <name type="scientific">Pseudomonas aeruginosa (strain UCBPP-PA14)</name>
    <dbReference type="NCBI Taxonomy" id="208963"/>
    <lineage>
        <taxon>Bacteria</taxon>
        <taxon>Pseudomonadati</taxon>
        <taxon>Pseudomonadota</taxon>
        <taxon>Gammaproteobacteria</taxon>
        <taxon>Pseudomonadales</taxon>
        <taxon>Pseudomonadaceae</taxon>
        <taxon>Pseudomonas</taxon>
    </lineage>
</organism>
<name>DPPB_PSEAB</name>
<gene>
    <name evidence="5" type="primary">dppB</name>
    <name evidence="7" type="ordered locus">PA14_58440</name>
</gene>
<sequence length="336" mass="37073">MLSFIARRLGLLIPTFFGVTLLTFALIRLIPGDPVEVMMGERRVDPQMHAEALHRLGLDKPLYQQYLDYVGNLAQGNLGESLTTREGVWHEFLTLFPATLELSLAAMLFAGTFGLLAGVIAALKRGSLFDHGVMTVSLAGYSMPIFWWGLILIMLFSVSLGWTPVSGRLDLLYDIEPKTGFMLIDTLLSDEQGSFLDAVRHLILPAIVLGTIPLAVIARMTRSAMLEVLREDYVRTARAKGLSPARVVFVHALRNALIPVLTVFGLQVGTLLAGAVLTETIFSWPGIGKWLIDAISRRDYPVVQNGILLVATLVILVNFVVDILYGLANPRIRHQR</sequence>
<protein>
    <recommendedName>
        <fullName evidence="6">Di/tripeptide transport system permease protein DppB</fullName>
    </recommendedName>
</protein>